<feature type="chain" id="PRO_0000313730" description="Very-long-chain (3R)-3-hydroxyacyl-CoA dehydratase 4">
    <location>
        <begin position="1"/>
        <end position="232"/>
    </location>
</feature>
<feature type="topological domain" description="Cytoplasmic" evidence="3">
    <location>
        <begin position="1"/>
        <end position="19"/>
    </location>
</feature>
<feature type="transmembrane region" description="Helical" evidence="3">
    <location>
        <begin position="20"/>
        <end position="40"/>
    </location>
</feature>
<feature type="topological domain" description="Lumenal" evidence="3">
    <location>
        <begin position="41"/>
        <end position="56"/>
    </location>
</feature>
<feature type="transmembrane region" description="Helical" evidence="3">
    <location>
        <begin position="57"/>
        <end position="77"/>
    </location>
</feature>
<feature type="topological domain" description="Cytoplasmic" evidence="3">
    <location>
        <begin position="78"/>
        <end position="112"/>
    </location>
</feature>
<feature type="transmembrane region" description="Helical" evidence="3">
    <location>
        <begin position="113"/>
        <end position="133"/>
    </location>
</feature>
<feature type="topological domain" description="Lumenal" evidence="3">
    <location>
        <begin position="134"/>
        <end position="135"/>
    </location>
</feature>
<feature type="transmembrane region" description="Helical" evidence="3">
    <location>
        <begin position="136"/>
        <end position="156"/>
    </location>
</feature>
<feature type="topological domain" description="Cytoplasmic" evidence="3">
    <location>
        <position position="157"/>
    </location>
</feature>
<feature type="transmembrane region" description="Helical" evidence="3">
    <location>
        <begin position="158"/>
        <end position="178"/>
    </location>
</feature>
<feature type="topological domain" description="Lumenal" evidence="3">
    <location>
        <begin position="179"/>
        <end position="189"/>
    </location>
</feature>
<feature type="transmembrane region" description="Helical" evidence="3">
    <location>
        <begin position="190"/>
        <end position="210"/>
    </location>
</feature>
<feature type="topological domain" description="Cytoplasmic" evidence="3">
    <location>
        <begin position="211"/>
        <end position="232"/>
    </location>
</feature>
<feature type="active site" evidence="1">
    <location>
        <position position="156"/>
    </location>
</feature>
<feature type="active site" evidence="1">
    <location>
        <position position="163"/>
    </location>
</feature>
<feature type="sequence variant" id="VAR_037714" description="In dbSNP:rs2298260.">
    <original>T</original>
    <variation>A</variation>
    <location>
        <position position="36"/>
    </location>
</feature>
<feature type="sequence conflict" description="In Ref. 4; CAD97990." evidence="6" ref="4">
    <original>M</original>
    <variation>V</variation>
    <location>
        <position position="133"/>
    </location>
</feature>
<dbReference type="EC" id="4.2.1.134" evidence="4"/>
<dbReference type="EMBL" id="AL390882">
    <property type="status" value="NOT_ANNOTATED_CDS"/>
    <property type="molecule type" value="Genomic_DNA"/>
</dbReference>
<dbReference type="EMBL" id="CH471071">
    <property type="protein sequence ID" value="EAW58626.1"/>
    <property type="molecule type" value="Genomic_DNA"/>
</dbReference>
<dbReference type="EMBL" id="BC114215">
    <property type="protein sequence ID" value="AAI14216.1"/>
    <property type="molecule type" value="mRNA"/>
</dbReference>
<dbReference type="EMBL" id="BX538052">
    <property type="protein sequence ID" value="CAD97990.1"/>
    <property type="molecule type" value="mRNA"/>
</dbReference>
<dbReference type="CCDS" id="CCDS43791.1"/>
<dbReference type="RefSeq" id="NP_001010915.2">
    <property type="nucleotide sequence ID" value="NM_001010915.5"/>
</dbReference>
<dbReference type="RefSeq" id="NP_001308812.1">
    <property type="nucleotide sequence ID" value="NM_001321883.1"/>
</dbReference>
<dbReference type="BioGRID" id="135110">
    <property type="interactions" value="1"/>
</dbReference>
<dbReference type="FunCoup" id="Q5VWC8">
    <property type="interactions" value="345"/>
</dbReference>
<dbReference type="IntAct" id="Q5VWC8">
    <property type="interactions" value="1"/>
</dbReference>
<dbReference type="STRING" id="9606.ENSP00000419503"/>
<dbReference type="SwissLipids" id="SLP:000000440"/>
<dbReference type="PhosphoSitePlus" id="Q5VWC8"/>
<dbReference type="BioMuta" id="HACD4"/>
<dbReference type="DMDM" id="74747375"/>
<dbReference type="MassIVE" id="Q5VWC8"/>
<dbReference type="PaxDb" id="9606-ENSP00000419503"/>
<dbReference type="PeptideAtlas" id="Q5VWC8"/>
<dbReference type="ProteomicsDB" id="65525"/>
<dbReference type="TopDownProteomics" id="Q5VWC8"/>
<dbReference type="Antibodypedia" id="24843">
    <property type="antibodies" value="26 antibodies from 13 providers"/>
</dbReference>
<dbReference type="DNASU" id="401494"/>
<dbReference type="Ensembl" id="ENST00000495827.3">
    <property type="protein sequence ID" value="ENSP00000419503.1"/>
    <property type="gene ID" value="ENSG00000188921.14"/>
</dbReference>
<dbReference type="GeneID" id="401494"/>
<dbReference type="KEGG" id="hsa:401494"/>
<dbReference type="MANE-Select" id="ENST00000495827.3">
    <property type="protein sequence ID" value="ENSP00000419503.1"/>
    <property type="RefSeq nucleotide sequence ID" value="NM_001010915.5"/>
    <property type="RefSeq protein sequence ID" value="NP_001010915.2"/>
</dbReference>
<dbReference type="UCSC" id="uc010miq.3">
    <property type="organism name" value="human"/>
</dbReference>
<dbReference type="AGR" id="HGNC:20920"/>
<dbReference type="CTD" id="401494"/>
<dbReference type="DisGeNET" id="401494"/>
<dbReference type="GeneCards" id="HACD4"/>
<dbReference type="HGNC" id="HGNC:20920">
    <property type="gene designation" value="HACD4"/>
</dbReference>
<dbReference type="HPA" id="ENSG00000188921">
    <property type="expression patterns" value="Tissue enhanced (bone)"/>
</dbReference>
<dbReference type="MIM" id="615941">
    <property type="type" value="gene"/>
</dbReference>
<dbReference type="neXtProt" id="NX_Q5VWC8"/>
<dbReference type="OpenTargets" id="ENSG00000188921"/>
<dbReference type="PharmGKB" id="PA142671114"/>
<dbReference type="VEuPathDB" id="HostDB:ENSG00000188921"/>
<dbReference type="eggNOG" id="KOG3187">
    <property type="taxonomic scope" value="Eukaryota"/>
</dbReference>
<dbReference type="GeneTree" id="ENSGT00530000062962"/>
<dbReference type="HOGENOM" id="CLU_034302_3_0_1"/>
<dbReference type="InParanoid" id="Q5VWC8"/>
<dbReference type="OMA" id="CGHTWIF"/>
<dbReference type="OrthoDB" id="46988at2759"/>
<dbReference type="PAN-GO" id="Q5VWC8">
    <property type="GO annotations" value="5 GO annotations based on evolutionary models"/>
</dbReference>
<dbReference type="PhylomeDB" id="Q5VWC8"/>
<dbReference type="TreeFam" id="TF313326"/>
<dbReference type="PathwayCommons" id="Q5VWC8"/>
<dbReference type="Reactome" id="R-HSA-75876">
    <property type="pathway name" value="Synthesis of very long-chain fatty acyl-CoAs"/>
</dbReference>
<dbReference type="SABIO-RK" id="Q5VWC8"/>
<dbReference type="SignaLink" id="Q5VWC8"/>
<dbReference type="SIGNOR" id="Q5VWC8"/>
<dbReference type="UniPathway" id="UPA00094"/>
<dbReference type="BioGRID-ORCS" id="401494">
    <property type="hits" value="16 hits in 1118 CRISPR screens"/>
</dbReference>
<dbReference type="ChiTaRS" id="HACD4">
    <property type="organism name" value="human"/>
</dbReference>
<dbReference type="GenomeRNAi" id="401494"/>
<dbReference type="Pharos" id="Q5VWC8">
    <property type="development level" value="Tbio"/>
</dbReference>
<dbReference type="PRO" id="PR:Q5VWC8"/>
<dbReference type="Proteomes" id="UP000005640">
    <property type="component" value="Chromosome 9"/>
</dbReference>
<dbReference type="RNAct" id="Q5VWC8">
    <property type="molecule type" value="protein"/>
</dbReference>
<dbReference type="Bgee" id="ENSG00000188921">
    <property type="expression patterns" value="Expressed in bronchial epithelial cell and 147 other cell types or tissues"/>
</dbReference>
<dbReference type="GO" id="GO:0005783">
    <property type="term" value="C:endoplasmic reticulum"/>
    <property type="evidence" value="ECO:0000314"/>
    <property type="project" value="UniProtKB"/>
</dbReference>
<dbReference type="GO" id="GO:0005789">
    <property type="term" value="C:endoplasmic reticulum membrane"/>
    <property type="evidence" value="ECO:0000318"/>
    <property type="project" value="GO_Central"/>
</dbReference>
<dbReference type="GO" id="GO:0018812">
    <property type="term" value="F:3-hydroxyacyl-CoA dehydratase activity"/>
    <property type="evidence" value="ECO:0000318"/>
    <property type="project" value="GO_Central"/>
</dbReference>
<dbReference type="GO" id="GO:0019899">
    <property type="term" value="F:enzyme binding"/>
    <property type="evidence" value="ECO:0000314"/>
    <property type="project" value="UniProtKB"/>
</dbReference>
<dbReference type="GO" id="GO:0102158">
    <property type="term" value="F:very-long-chain (3R)-3-hydroxyacyl-CoA dehydratase activity"/>
    <property type="evidence" value="ECO:0000314"/>
    <property type="project" value="UniProtKB"/>
</dbReference>
<dbReference type="GO" id="GO:0030497">
    <property type="term" value="P:fatty acid elongation"/>
    <property type="evidence" value="ECO:0000314"/>
    <property type="project" value="UniProtKB"/>
</dbReference>
<dbReference type="GO" id="GO:0030148">
    <property type="term" value="P:sphingolipid biosynthetic process"/>
    <property type="evidence" value="ECO:0000318"/>
    <property type="project" value="GO_Central"/>
</dbReference>
<dbReference type="GO" id="GO:0042761">
    <property type="term" value="P:very long-chain fatty acid biosynthetic process"/>
    <property type="evidence" value="ECO:0000314"/>
    <property type="project" value="UniProtKB"/>
</dbReference>
<dbReference type="InterPro" id="IPR007482">
    <property type="entry name" value="Tyr_Pase-like_PTPLA"/>
</dbReference>
<dbReference type="PANTHER" id="PTHR11035">
    <property type="entry name" value="VERY-LONG-CHAIN (3R)-3-HYDROXYACYL-COA DEHYDRATASE"/>
    <property type="match status" value="1"/>
</dbReference>
<dbReference type="PANTHER" id="PTHR11035:SF16">
    <property type="entry name" value="VERY-LONG-CHAIN (3R)-3-HYDROXYACYL-COA DEHYDRATASE 4"/>
    <property type="match status" value="1"/>
</dbReference>
<dbReference type="Pfam" id="PF04387">
    <property type="entry name" value="PTPLA"/>
    <property type="match status" value="1"/>
</dbReference>
<proteinExistence type="evidence at protein level"/>
<gene>
    <name evidence="5 8" type="primary">HACD4</name>
    <name type="synonym">PTPLAD2</name>
</gene>
<keyword id="KW-0256">Endoplasmic reticulum</keyword>
<keyword id="KW-0275">Fatty acid biosynthesis</keyword>
<keyword id="KW-0276">Fatty acid metabolism</keyword>
<keyword id="KW-0444">Lipid biosynthesis</keyword>
<keyword id="KW-0443">Lipid metabolism</keyword>
<keyword id="KW-0456">Lyase</keyword>
<keyword id="KW-0472">Membrane</keyword>
<keyword id="KW-1267">Proteomics identification</keyword>
<keyword id="KW-1185">Reference proteome</keyword>
<keyword id="KW-0812">Transmembrane</keyword>
<keyword id="KW-1133">Transmembrane helix</keyword>
<organism>
    <name type="scientific">Homo sapiens</name>
    <name type="common">Human</name>
    <dbReference type="NCBI Taxonomy" id="9606"/>
    <lineage>
        <taxon>Eukaryota</taxon>
        <taxon>Metazoa</taxon>
        <taxon>Chordata</taxon>
        <taxon>Craniata</taxon>
        <taxon>Vertebrata</taxon>
        <taxon>Euteleostomi</taxon>
        <taxon>Mammalia</taxon>
        <taxon>Eutheria</taxon>
        <taxon>Euarchontoglires</taxon>
        <taxon>Primates</taxon>
        <taxon>Haplorrhini</taxon>
        <taxon>Catarrhini</taxon>
        <taxon>Hominidae</taxon>
        <taxon>Homo</taxon>
    </lineage>
</organism>
<sequence length="232" mass="27520">MGPLALPAWLQPRYRKNAYLFIYYLIQFCGHSWIFTNMTVRFFSFGKDSMVDTFYAIGLVMRLCQSVSLLELLHIYVGIESNHLLPRFLQLTERIIILFVVITSQEEVQEKYVVCVLFVFWNLLDMVRYTYSMLSVIGISYAVLTWLSQTLWMPIYPLCVLAEAFAIYQSLPYFESFGTYSTKLPFDLSIYFPYVLKIYLMMLFIGMYFTYSHLYSERRDILGIFPIKKKKM</sequence>
<evidence type="ECO:0000250" key="1">
    <source>
        <dbReference type="UniProtKB" id="P40857"/>
    </source>
</evidence>
<evidence type="ECO:0000250" key="2">
    <source>
        <dbReference type="UniProtKB" id="Q6Y1H2"/>
    </source>
</evidence>
<evidence type="ECO:0000255" key="3"/>
<evidence type="ECO:0000269" key="4">
    <source>
    </source>
</evidence>
<evidence type="ECO:0000303" key="5">
    <source>
    </source>
</evidence>
<evidence type="ECO:0000305" key="6"/>
<evidence type="ECO:0000305" key="7">
    <source>
    </source>
</evidence>
<evidence type="ECO:0000312" key="8">
    <source>
        <dbReference type="HGNC" id="HGNC:20920"/>
    </source>
</evidence>
<name>HACD4_HUMAN</name>
<comment type="function">
    <text evidence="4">Catalyzes the third of the four reactions of the long-chain fatty acids elongation cycle. This endoplasmic reticulum-bound enzymatic process, allows the addition of two carbons to the chain of long- and very long-chain fatty acids/VLCFAs per cycle. This enzyme catalyzes the dehydration of the 3-hydroxyacyl-CoA intermediate into trans-2,3-enoyl-CoA, within each cycle of fatty acid elongation. Thereby, it participates in the production of VLCFAs of different chain lengths that are involved in multiple biological processes as precursors of membrane lipids and lipid mediators.</text>
</comment>
<comment type="catalytic activity">
    <reaction evidence="4">
        <text>a very-long-chain (3R)-3-hydroxyacyl-CoA = a very-long-chain (2E)-enoyl-CoA + H2O</text>
        <dbReference type="Rhea" id="RHEA:45812"/>
        <dbReference type="ChEBI" id="CHEBI:15377"/>
        <dbReference type="ChEBI" id="CHEBI:83728"/>
        <dbReference type="ChEBI" id="CHEBI:85440"/>
        <dbReference type="EC" id="4.2.1.134"/>
    </reaction>
    <physiologicalReaction direction="left-to-right" evidence="7">
        <dbReference type="Rhea" id="RHEA:45813"/>
    </physiologicalReaction>
</comment>
<comment type="catalytic activity">
    <reaction evidence="4">
        <text>(3R)-hydroxyhexadecanoyl-CoA = (2E)-hexadecenoyl-CoA + H2O</text>
        <dbReference type="Rhea" id="RHEA:39159"/>
        <dbReference type="ChEBI" id="CHEBI:15377"/>
        <dbReference type="ChEBI" id="CHEBI:61526"/>
        <dbReference type="ChEBI" id="CHEBI:74278"/>
    </reaction>
    <physiologicalReaction direction="left-to-right" evidence="7">
        <dbReference type="Rhea" id="RHEA:39160"/>
    </physiologicalReaction>
</comment>
<comment type="biophysicochemical properties">
    <kinetics>
        <KM evidence="4">6.8 uM for 3-hydroxypalmitoyl-CoA (at 37 degrees Celsius)</KM>
    </kinetics>
</comment>
<comment type="pathway">
    <text evidence="4">Lipid metabolism; fatty acid biosynthesis.</text>
</comment>
<comment type="subunit">
    <text evidence="4">May interact with enzymes of the ELO family (including ELOVL1); with those enzymes that mediate condensation, the first of the four steps of the reaction cycle responsible for fatty acids elongation, may be part of a larger fatty acids elongase complex.</text>
</comment>
<comment type="interaction">
    <interactant intactId="EBI-18076069">
        <id>Q5VWC8</id>
    </interactant>
    <interactant intactId="EBI-7797864">
        <id>P11912</id>
        <label>CD79A</label>
    </interactant>
    <organismsDiffer>false</organismsDiffer>
    <experiments>3</experiments>
</comment>
<comment type="subcellular location">
    <subcellularLocation>
        <location evidence="4">Endoplasmic reticulum membrane</location>
        <topology evidence="4">Multi-pass membrane protein</topology>
    </subcellularLocation>
</comment>
<comment type="tissue specificity">
    <text evidence="4">Highly expressed in leukocytes, and low expression in heart, spleen, kidney, and placenta.</text>
</comment>
<comment type="similarity">
    <text evidence="6">Belongs to the very long-chain fatty acids dehydratase HACD family.</text>
</comment>
<comment type="caution">
    <text evidence="2 7">Shares some similarity with tyrosine phosphatase proteins but it has probably no phosphatase activity.</text>
</comment>
<protein>
    <recommendedName>
        <fullName evidence="6">Very-long-chain (3R)-3-hydroxyacyl-CoA dehydratase 4</fullName>
        <ecNumber evidence="4">4.2.1.134</ecNumber>
    </recommendedName>
    <alternativeName>
        <fullName evidence="5">3-hydroxyacyl-CoA dehydratase 4</fullName>
        <shortName evidence="5">HACD4</shortName>
    </alternativeName>
    <alternativeName>
        <fullName evidence="8">Protein-tyrosine phosphatase-like A domain-containing protein 2</fullName>
    </alternativeName>
</protein>
<accession>Q5VWC8</accession>
<accession>Q7Z385</accession>
<reference key="1">
    <citation type="journal article" date="2004" name="Nature">
        <title>DNA sequence and analysis of human chromosome 9.</title>
        <authorList>
            <person name="Humphray S.J."/>
            <person name="Oliver K."/>
            <person name="Hunt A.R."/>
            <person name="Plumb R.W."/>
            <person name="Loveland J.E."/>
            <person name="Howe K.L."/>
            <person name="Andrews T.D."/>
            <person name="Searle S."/>
            <person name="Hunt S.E."/>
            <person name="Scott C.E."/>
            <person name="Jones M.C."/>
            <person name="Ainscough R."/>
            <person name="Almeida J.P."/>
            <person name="Ambrose K.D."/>
            <person name="Ashwell R.I.S."/>
            <person name="Babbage A.K."/>
            <person name="Babbage S."/>
            <person name="Bagguley C.L."/>
            <person name="Bailey J."/>
            <person name="Banerjee R."/>
            <person name="Barker D.J."/>
            <person name="Barlow K.F."/>
            <person name="Bates K."/>
            <person name="Beasley H."/>
            <person name="Beasley O."/>
            <person name="Bird C.P."/>
            <person name="Bray-Allen S."/>
            <person name="Brown A.J."/>
            <person name="Brown J.Y."/>
            <person name="Burford D."/>
            <person name="Burrill W."/>
            <person name="Burton J."/>
            <person name="Carder C."/>
            <person name="Carter N.P."/>
            <person name="Chapman J.C."/>
            <person name="Chen Y."/>
            <person name="Clarke G."/>
            <person name="Clark S.Y."/>
            <person name="Clee C.M."/>
            <person name="Clegg S."/>
            <person name="Collier R.E."/>
            <person name="Corby N."/>
            <person name="Crosier M."/>
            <person name="Cummings A.T."/>
            <person name="Davies J."/>
            <person name="Dhami P."/>
            <person name="Dunn M."/>
            <person name="Dutta I."/>
            <person name="Dyer L.W."/>
            <person name="Earthrowl M.E."/>
            <person name="Faulkner L."/>
            <person name="Fleming C.J."/>
            <person name="Frankish A."/>
            <person name="Frankland J.A."/>
            <person name="French L."/>
            <person name="Fricker D.G."/>
            <person name="Garner P."/>
            <person name="Garnett J."/>
            <person name="Ghori J."/>
            <person name="Gilbert J.G.R."/>
            <person name="Glison C."/>
            <person name="Grafham D.V."/>
            <person name="Gribble S."/>
            <person name="Griffiths C."/>
            <person name="Griffiths-Jones S."/>
            <person name="Grocock R."/>
            <person name="Guy J."/>
            <person name="Hall R.E."/>
            <person name="Hammond S."/>
            <person name="Harley J.L."/>
            <person name="Harrison E.S.I."/>
            <person name="Hart E.A."/>
            <person name="Heath P.D."/>
            <person name="Henderson C.D."/>
            <person name="Hopkins B.L."/>
            <person name="Howard P.J."/>
            <person name="Howden P.J."/>
            <person name="Huckle E."/>
            <person name="Johnson C."/>
            <person name="Johnson D."/>
            <person name="Joy A.A."/>
            <person name="Kay M."/>
            <person name="Keenan S."/>
            <person name="Kershaw J.K."/>
            <person name="Kimberley A.M."/>
            <person name="King A."/>
            <person name="Knights A."/>
            <person name="Laird G.K."/>
            <person name="Langford C."/>
            <person name="Lawlor S."/>
            <person name="Leongamornlert D.A."/>
            <person name="Leversha M."/>
            <person name="Lloyd C."/>
            <person name="Lloyd D.M."/>
            <person name="Lovell J."/>
            <person name="Martin S."/>
            <person name="Mashreghi-Mohammadi M."/>
            <person name="Matthews L."/>
            <person name="McLaren S."/>
            <person name="McLay K.E."/>
            <person name="McMurray A."/>
            <person name="Milne S."/>
            <person name="Nickerson T."/>
            <person name="Nisbett J."/>
            <person name="Nordsiek G."/>
            <person name="Pearce A.V."/>
            <person name="Peck A.I."/>
            <person name="Porter K.M."/>
            <person name="Pandian R."/>
            <person name="Pelan S."/>
            <person name="Phillimore B."/>
            <person name="Povey S."/>
            <person name="Ramsey Y."/>
            <person name="Rand V."/>
            <person name="Scharfe M."/>
            <person name="Sehra H.K."/>
            <person name="Shownkeen R."/>
            <person name="Sims S.K."/>
            <person name="Skuce C.D."/>
            <person name="Smith M."/>
            <person name="Steward C.A."/>
            <person name="Swarbreck D."/>
            <person name="Sycamore N."/>
            <person name="Tester J."/>
            <person name="Thorpe A."/>
            <person name="Tracey A."/>
            <person name="Tromans A."/>
            <person name="Thomas D.W."/>
            <person name="Wall M."/>
            <person name="Wallis J.M."/>
            <person name="West A.P."/>
            <person name="Whitehead S.L."/>
            <person name="Willey D.L."/>
            <person name="Williams S.A."/>
            <person name="Wilming L."/>
            <person name="Wray P.W."/>
            <person name="Young L."/>
            <person name="Ashurst J.L."/>
            <person name="Coulson A."/>
            <person name="Blocker H."/>
            <person name="Durbin R.M."/>
            <person name="Sulston J.E."/>
            <person name="Hubbard T."/>
            <person name="Jackson M.J."/>
            <person name="Bentley D.R."/>
            <person name="Beck S."/>
            <person name="Rogers J."/>
            <person name="Dunham I."/>
        </authorList>
    </citation>
    <scope>NUCLEOTIDE SEQUENCE [LARGE SCALE GENOMIC DNA]</scope>
</reference>
<reference key="2">
    <citation type="submission" date="2005-09" db="EMBL/GenBank/DDBJ databases">
        <authorList>
            <person name="Mural R.J."/>
            <person name="Istrail S."/>
            <person name="Sutton G.G."/>
            <person name="Florea L."/>
            <person name="Halpern A.L."/>
            <person name="Mobarry C.M."/>
            <person name="Lippert R."/>
            <person name="Walenz B."/>
            <person name="Shatkay H."/>
            <person name="Dew I."/>
            <person name="Miller J.R."/>
            <person name="Flanigan M.J."/>
            <person name="Edwards N.J."/>
            <person name="Bolanos R."/>
            <person name="Fasulo D."/>
            <person name="Halldorsson B.V."/>
            <person name="Hannenhalli S."/>
            <person name="Turner R."/>
            <person name="Yooseph S."/>
            <person name="Lu F."/>
            <person name="Nusskern D.R."/>
            <person name="Shue B.C."/>
            <person name="Zheng X.H."/>
            <person name="Zhong F."/>
            <person name="Delcher A.L."/>
            <person name="Huson D.H."/>
            <person name="Kravitz S.A."/>
            <person name="Mouchard L."/>
            <person name="Reinert K."/>
            <person name="Remington K.A."/>
            <person name="Clark A.G."/>
            <person name="Waterman M.S."/>
            <person name="Eichler E.E."/>
            <person name="Adams M.D."/>
            <person name="Hunkapiller M.W."/>
            <person name="Myers E.W."/>
            <person name="Venter J.C."/>
        </authorList>
    </citation>
    <scope>NUCLEOTIDE SEQUENCE [LARGE SCALE GENOMIC DNA]</scope>
</reference>
<reference key="3">
    <citation type="journal article" date="2004" name="Genome Res.">
        <title>The status, quality, and expansion of the NIH full-length cDNA project: the Mammalian Gene Collection (MGC).</title>
        <authorList>
            <consortium name="The MGC Project Team"/>
        </authorList>
    </citation>
    <scope>NUCLEOTIDE SEQUENCE [LARGE SCALE MRNA]</scope>
    <source>
        <tissue>Brain</tissue>
    </source>
</reference>
<reference key="4">
    <citation type="journal article" date="2007" name="BMC Genomics">
        <title>The full-ORF clone resource of the German cDNA consortium.</title>
        <authorList>
            <person name="Bechtel S."/>
            <person name="Rosenfelder H."/>
            <person name="Duda A."/>
            <person name="Schmidt C.P."/>
            <person name="Ernst U."/>
            <person name="Wellenreuther R."/>
            <person name="Mehrle A."/>
            <person name="Schuster C."/>
            <person name="Bahr A."/>
            <person name="Bloecker H."/>
            <person name="Heubner D."/>
            <person name="Hoerlein A."/>
            <person name="Michel G."/>
            <person name="Wedler H."/>
            <person name="Koehrer K."/>
            <person name="Ottenwaelder B."/>
            <person name="Poustka A."/>
            <person name="Wiemann S."/>
            <person name="Schupp I."/>
        </authorList>
    </citation>
    <scope>NUCLEOTIDE SEQUENCE [LARGE SCALE MRNA] OF 40-232</scope>
    <source>
        <tissue>Colon endothelium</tissue>
    </source>
</reference>
<reference key="5">
    <citation type="journal article" date="2008" name="FEBS Lett.">
        <title>Characterization of four mammalian 3-hydroxyacyl-CoA dehydratases involved in very long-chain fatty acid synthesis.</title>
        <authorList>
            <person name="Ikeda M."/>
            <person name="Kanao Y."/>
            <person name="Yamanaka M."/>
            <person name="Sakuraba H."/>
            <person name="Mizutani Y."/>
            <person name="Igarashi Y."/>
            <person name="Kihara A."/>
        </authorList>
    </citation>
    <scope>FUNCTION</scope>
    <scope>SUBCELLULAR LOCATION</scope>
    <scope>CATALYTIC ACTIVITY</scope>
    <scope>PATHWAY</scope>
    <scope>BIOPHYSICOCHEMICAL PROPERTIES</scope>
    <scope>TISSUE SPECIFICITY</scope>
    <scope>INTERACTION WITH ELOVL FAMILY</scope>
</reference>